<comment type="catalytic activity">
    <reaction evidence="1">
        <text>tRNA(Leu) + L-leucine + ATP = L-leucyl-tRNA(Leu) + AMP + diphosphate</text>
        <dbReference type="Rhea" id="RHEA:11688"/>
        <dbReference type="Rhea" id="RHEA-COMP:9613"/>
        <dbReference type="Rhea" id="RHEA-COMP:9622"/>
        <dbReference type="ChEBI" id="CHEBI:30616"/>
        <dbReference type="ChEBI" id="CHEBI:33019"/>
        <dbReference type="ChEBI" id="CHEBI:57427"/>
        <dbReference type="ChEBI" id="CHEBI:78442"/>
        <dbReference type="ChEBI" id="CHEBI:78494"/>
        <dbReference type="ChEBI" id="CHEBI:456215"/>
        <dbReference type="EC" id="6.1.1.4"/>
    </reaction>
</comment>
<comment type="subcellular location">
    <subcellularLocation>
        <location>Cytoplasm</location>
    </subcellularLocation>
</comment>
<comment type="similarity">
    <text evidence="1">Belongs to the class-I aminoacyl-tRNA synthetase family.</text>
</comment>
<gene>
    <name evidence="1" type="primary">leuS</name>
    <name type="ordered locus">TV0772</name>
    <name type="ORF">TVG0775903</name>
</gene>
<proteinExistence type="inferred from homology"/>
<organism>
    <name type="scientific">Thermoplasma volcanium (strain ATCC 51530 / DSM 4299 / JCM 9571 / NBRC 15438 / GSS1)</name>
    <dbReference type="NCBI Taxonomy" id="273116"/>
    <lineage>
        <taxon>Archaea</taxon>
        <taxon>Methanobacteriati</taxon>
        <taxon>Thermoplasmatota</taxon>
        <taxon>Thermoplasmata</taxon>
        <taxon>Thermoplasmatales</taxon>
        <taxon>Thermoplasmataceae</taxon>
        <taxon>Thermoplasma</taxon>
    </lineage>
</organism>
<protein>
    <recommendedName>
        <fullName evidence="1">Leucine--tRNA ligase</fullName>
        <ecNumber evidence="1">6.1.1.4</ecNumber>
    </recommendedName>
    <alternativeName>
        <fullName evidence="1">Leucyl-tRNA synthetase</fullName>
        <shortName evidence="1">LeuRS</shortName>
    </alternativeName>
</protein>
<reference key="1">
    <citation type="journal article" date="2000" name="Proc. Natl. Acad. Sci. U.S.A.">
        <title>Archaeal adaptation to higher temperatures revealed by genomic sequence of Thermoplasma volcanium.</title>
        <authorList>
            <person name="Kawashima T."/>
            <person name="Amano N."/>
            <person name="Koike H."/>
            <person name="Makino S."/>
            <person name="Higuchi S."/>
            <person name="Kawashima-Ohya Y."/>
            <person name="Watanabe K."/>
            <person name="Yamazaki M."/>
            <person name="Kanehori K."/>
            <person name="Kawamoto T."/>
            <person name="Nunoshiba T."/>
            <person name="Yamamoto Y."/>
            <person name="Aramaki H."/>
            <person name="Makino K."/>
            <person name="Suzuki M."/>
        </authorList>
    </citation>
    <scope>NUCLEOTIDE SEQUENCE [LARGE SCALE GENOMIC DNA]</scope>
    <source>
        <strain>ATCC 51530 / DSM 4299 / JCM 9571 / NBRC 15438 / GSS1</strain>
    </source>
</reference>
<accession>Q97AN8</accession>
<keyword id="KW-0030">Aminoacyl-tRNA synthetase</keyword>
<keyword id="KW-0067">ATP-binding</keyword>
<keyword id="KW-0963">Cytoplasm</keyword>
<keyword id="KW-0436">Ligase</keyword>
<keyword id="KW-0547">Nucleotide-binding</keyword>
<keyword id="KW-0648">Protein biosynthesis</keyword>
<dbReference type="EC" id="6.1.1.4" evidence="1"/>
<dbReference type="EMBL" id="BA000011">
    <property type="protein sequence ID" value="BAB59914.1"/>
    <property type="molecule type" value="Genomic_DNA"/>
</dbReference>
<dbReference type="SMR" id="Q97AN8"/>
<dbReference type="STRING" id="273116.gene:9381562"/>
<dbReference type="PaxDb" id="273116-14324988"/>
<dbReference type="KEGG" id="tvo:TVG0775903"/>
<dbReference type="eggNOG" id="arCOG00809">
    <property type="taxonomic scope" value="Archaea"/>
</dbReference>
<dbReference type="HOGENOM" id="CLU_004174_0_0_2"/>
<dbReference type="OrthoDB" id="23906at2157"/>
<dbReference type="PhylomeDB" id="Q97AN8"/>
<dbReference type="Proteomes" id="UP000001017">
    <property type="component" value="Chromosome"/>
</dbReference>
<dbReference type="GO" id="GO:0005737">
    <property type="term" value="C:cytoplasm"/>
    <property type="evidence" value="ECO:0007669"/>
    <property type="project" value="UniProtKB-SubCell"/>
</dbReference>
<dbReference type="GO" id="GO:0002161">
    <property type="term" value="F:aminoacyl-tRNA deacylase activity"/>
    <property type="evidence" value="ECO:0007669"/>
    <property type="project" value="InterPro"/>
</dbReference>
<dbReference type="GO" id="GO:0005524">
    <property type="term" value="F:ATP binding"/>
    <property type="evidence" value="ECO:0007669"/>
    <property type="project" value="UniProtKB-UniRule"/>
</dbReference>
<dbReference type="GO" id="GO:0004823">
    <property type="term" value="F:leucine-tRNA ligase activity"/>
    <property type="evidence" value="ECO:0007669"/>
    <property type="project" value="UniProtKB-UniRule"/>
</dbReference>
<dbReference type="GO" id="GO:0006429">
    <property type="term" value="P:leucyl-tRNA aminoacylation"/>
    <property type="evidence" value="ECO:0007669"/>
    <property type="project" value="UniProtKB-UniRule"/>
</dbReference>
<dbReference type="Gene3D" id="3.30.2320.20">
    <property type="entry name" value="Class I aminoacyl-tRNA synthetases (RS)"/>
    <property type="match status" value="1"/>
</dbReference>
<dbReference type="Gene3D" id="3.40.50.620">
    <property type="entry name" value="HUPs"/>
    <property type="match status" value="1"/>
</dbReference>
<dbReference type="Gene3D" id="1.10.730.10">
    <property type="entry name" value="Isoleucyl-tRNA Synthetase, Domain 1"/>
    <property type="match status" value="1"/>
</dbReference>
<dbReference type="Gene3D" id="1.10.10.720">
    <property type="entry name" value="leucyl-tRNA synthetase"/>
    <property type="match status" value="1"/>
</dbReference>
<dbReference type="Gene3D" id="3.90.740.10">
    <property type="entry name" value="Valyl/Leucyl/Isoleucyl-tRNA synthetase, editing domain"/>
    <property type="match status" value="1"/>
</dbReference>
<dbReference type="HAMAP" id="MF_00049_A">
    <property type="entry name" value="Leu_tRNA_synth_A"/>
    <property type="match status" value="1"/>
</dbReference>
<dbReference type="InterPro" id="IPR001412">
    <property type="entry name" value="aa-tRNA-synth_I_CS"/>
</dbReference>
<dbReference type="InterPro" id="IPR002300">
    <property type="entry name" value="aa-tRNA-synth_Ia"/>
</dbReference>
<dbReference type="InterPro" id="IPR020791">
    <property type="entry name" value="Leu-tRNA-lgase_arc"/>
</dbReference>
<dbReference type="InterPro" id="IPR004493">
    <property type="entry name" value="Leu-tRNA-synth_Ia_arc/euk"/>
</dbReference>
<dbReference type="InterPro" id="IPR013155">
    <property type="entry name" value="M/V/L/I-tRNA-synth_anticd-bd"/>
</dbReference>
<dbReference type="InterPro" id="IPR014729">
    <property type="entry name" value="Rossmann-like_a/b/a_fold"/>
</dbReference>
<dbReference type="InterPro" id="IPR009080">
    <property type="entry name" value="tRNAsynth_Ia_anticodon-bd"/>
</dbReference>
<dbReference type="InterPro" id="IPR009008">
    <property type="entry name" value="Val/Leu/Ile-tRNA-synth_edit"/>
</dbReference>
<dbReference type="NCBIfam" id="TIGR00395">
    <property type="entry name" value="leuS_arch"/>
    <property type="match status" value="1"/>
</dbReference>
<dbReference type="NCBIfam" id="NF008957">
    <property type="entry name" value="PRK12300.1"/>
    <property type="match status" value="1"/>
</dbReference>
<dbReference type="PANTHER" id="PTHR45794:SF1">
    <property type="entry name" value="LEUCINE--TRNA LIGASE, CYTOPLASMIC"/>
    <property type="match status" value="1"/>
</dbReference>
<dbReference type="PANTHER" id="PTHR45794">
    <property type="entry name" value="LEUCYL-TRNA SYNTHETASE"/>
    <property type="match status" value="1"/>
</dbReference>
<dbReference type="Pfam" id="PF08264">
    <property type="entry name" value="Anticodon_1"/>
    <property type="match status" value="1"/>
</dbReference>
<dbReference type="Pfam" id="PF00133">
    <property type="entry name" value="tRNA-synt_1"/>
    <property type="match status" value="1"/>
</dbReference>
<dbReference type="SUPFAM" id="SSF47323">
    <property type="entry name" value="Anticodon-binding domain of a subclass of class I aminoacyl-tRNA synthetases"/>
    <property type="match status" value="1"/>
</dbReference>
<dbReference type="SUPFAM" id="SSF52374">
    <property type="entry name" value="Nucleotidylyl transferase"/>
    <property type="match status" value="1"/>
</dbReference>
<dbReference type="SUPFAM" id="SSF50677">
    <property type="entry name" value="ValRS/IleRS/LeuRS editing domain"/>
    <property type="match status" value="1"/>
</dbReference>
<dbReference type="PROSITE" id="PS00178">
    <property type="entry name" value="AA_TRNA_LIGASE_I"/>
    <property type="match status" value="1"/>
</dbReference>
<feature type="chain" id="PRO_0000152149" description="Leucine--tRNA ligase">
    <location>
        <begin position="1"/>
        <end position="910"/>
    </location>
</feature>
<feature type="short sequence motif" description="'HIGH' region">
    <location>
        <begin position="50"/>
        <end position="60"/>
    </location>
</feature>
<feature type="short sequence motif" description="'KMSKS' region">
    <location>
        <begin position="611"/>
        <end position="615"/>
    </location>
</feature>
<feature type="binding site" evidence="1">
    <location>
        <position position="614"/>
    </location>
    <ligand>
        <name>ATP</name>
        <dbReference type="ChEBI" id="CHEBI:30616"/>
    </ligand>
</feature>
<sequence>MDYSRCCGSTNSRVIYMNIDEKWQNAWERDHVFEPKIDERKKFMITVPWPYTNGSLHVGHGRTYTLGDIIARYKRSRNYNVLFPMGFHQSGTPILAFSERIRAGDASTIALYRSYLSEYGEKDIDGWLEKFKDPRNIADYFSNAIINDFKHLGYSIDWTRKFTSADEFYQNVVKWQFHKLNEKGLIKQDKYPILYSIDDDNAVGEDDIKDGDTDKVSVEEYTAVFFESNSYSLIAASLRPETLFGVTNIWINPTGEYVKIKIGDKIAVVSKEAVDKLKYQRNDVSVIGPISAESIQRKKFTTPFGKEVPVYKADFVDTDNGTGVVYSVPSHSVYDFVYYRRKKSGQTPVVIEAPLKMPEVEIKFDLNSKEGLDEATKELYKSEFYYGKLVNSGEYTGLTVRDAREKIKKDLIGSGKAIIFYETSRKAVTRGGSKVIVAVLPDQWFIDYSADWLKKLSHDMLNRMMIYPEMYRNVMNDAIDWLKERPCARRRGLGTKLPFDDRWVIESLSDSTIYPAVYTTSIQMRKLYENGKLDENAIERIFDGGEVQNDEERTARNEFSYWYPVDIRLTAVPHISNHLSFYVMNHAAIFPPEKWPSGLIISGLVVSNGAKISKSKGNVVSLLEITKKYSADIYRLYVAVQADVSSTMDWNENDLSNIVRRFNEFKTIMDSFKPDTSELNFEETWFVSRFAERLKQFMDQMDGFQIRDAYINIFYGTLNDLKYAVNRGASQNRSLASIIADWLRALMPVISHHAEEYWHRYVSNTYVSINPFDDNFAEKYERLAKVYGLSTSEFYQVMDYVEHIIQDINNIISVTGIEPKSVEITVANEDVIKASREFLSNSVSERSKRYLQYLAKRRKDIVVYPFNEIDILRRNSSYISRQVKADVSINTGDIINGKIAVPGKPVIHIT</sequence>
<evidence type="ECO:0000255" key="1">
    <source>
        <dbReference type="HAMAP-Rule" id="MF_00049"/>
    </source>
</evidence>
<name>SYL_THEVO</name>